<accession>P85006</accession>
<sequence>ASDVTLNSFAEDVTVGECCDCVDLTTVY</sequence>
<dbReference type="EC" id="3.4.24.-"/>
<dbReference type="GO" id="GO:0005576">
    <property type="term" value="C:extracellular region"/>
    <property type="evidence" value="ECO:0007669"/>
    <property type="project" value="UniProtKB-SubCell"/>
</dbReference>
<dbReference type="GO" id="GO:0046872">
    <property type="term" value="F:metal ion binding"/>
    <property type="evidence" value="ECO:0007669"/>
    <property type="project" value="UniProtKB-KW"/>
</dbReference>
<dbReference type="GO" id="GO:0008237">
    <property type="term" value="F:metallopeptidase activity"/>
    <property type="evidence" value="ECO:0007669"/>
    <property type="project" value="UniProtKB-KW"/>
</dbReference>
<dbReference type="GO" id="GO:0090729">
    <property type="term" value="F:toxin activity"/>
    <property type="evidence" value="ECO:0007669"/>
    <property type="project" value="UniProtKB-KW"/>
</dbReference>
<dbReference type="GO" id="GO:0006508">
    <property type="term" value="P:proteolysis"/>
    <property type="evidence" value="ECO:0007669"/>
    <property type="project" value="UniProtKB-KW"/>
</dbReference>
<reference evidence="4" key="1">
    <citation type="journal article" date="2005" name="Toxicon">
        <title>Characterization of a novel protein from Proatheris superciliaris venom: proatherocytin, a 34-kDa platelet receptor PAR1 agonist.</title>
        <authorList>
            <person name="Laing G.D."/>
            <person name="Compton S.J."/>
            <person name="Ramachandran R."/>
            <person name="Fuller G.L.J."/>
            <person name="Wilkinson M.C."/>
            <person name="Wagstaff S.C."/>
            <person name="Watson S.P."/>
            <person name="Kamiguti A.S."/>
            <person name="Theakston R.D.G."/>
            <person name="Senis Y.A."/>
        </authorList>
    </citation>
    <scope>PROTEIN SEQUENCE</scope>
    <scope>SUBCELLULAR LOCATION</scope>
    <scope>TISSUE SPECIFICITY</scope>
    <source>
        <tissue evidence="2">Venom</tissue>
    </source>
</reference>
<comment type="cofactor">
    <cofactor evidence="1">
        <name>Zn(2+)</name>
        <dbReference type="ChEBI" id="CHEBI:29105"/>
    </cofactor>
    <text evidence="1">Binds 1 zinc ion per subunit.</text>
</comment>
<comment type="subcellular location">
    <subcellularLocation>
        <location evidence="2">Secreted</location>
    </subcellularLocation>
</comment>
<comment type="tissue specificity">
    <text evidence="2">Expressed by the venom gland.</text>
</comment>
<comment type="similarity">
    <text evidence="4">Belongs to the venom metalloproteinase (M12B) family.</text>
</comment>
<name>VMXP_PROSR</name>
<proteinExistence type="evidence at protein level"/>
<organism>
    <name type="scientific">Proatheris superciliaris</name>
    <name type="common">Lowland swamp viper</name>
    <dbReference type="NCBI Taxonomy" id="110218"/>
    <lineage>
        <taxon>Eukaryota</taxon>
        <taxon>Metazoa</taxon>
        <taxon>Chordata</taxon>
        <taxon>Craniata</taxon>
        <taxon>Vertebrata</taxon>
        <taxon>Euteleostomi</taxon>
        <taxon>Lepidosauria</taxon>
        <taxon>Squamata</taxon>
        <taxon>Bifurcata</taxon>
        <taxon>Unidentata</taxon>
        <taxon>Episquamata</taxon>
        <taxon>Toxicofera</taxon>
        <taxon>Serpentes</taxon>
        <taxon>Colubroidea</taxon>
        <taxon>Viperidae</taxon>
        <taxon>Viperinae</taxon>
        <taxon>Proatheris</taxon>
    </lineage>
</organism>
<keyword id="KW-0903">Direct protein sequencing</keyword>
<keyword id="KW-0378">Hydrolase</keyword>
<keyword id="KW-0479">Metal-binding</keyword>
<keyword id="KW-0482">Metalloprotease</keyword>
<keyword id="KW-0645">Protease</keyword>
<keyword id="KW-0964">Secreted</keyword>
<keyword id="KW-0800">Toxin</keyword>
<keyword id="KW-0862">Zinc</keyword>
<protein>
    <recommendedName>
        <fullName>50 kDa venom protease</fullName>
        <ecNumber>3.4.24.-</ecNumber>
    </recommendedName>
    <alternativeName>
        <fullName>Snake venom metalloproteinase</fullName>
        <shortName>SVMP</shortName>
    </alternativeName>
</protein>
<evidence type="ECO:0000250" key="1">
    <source>
        <dbReference type="UniProtKB" id="P30431"/>
    </source>
</evidence>
<evidence type="ECO:0000269" key="2">
    <source>
    </source>
</evidence>
<evidence type="ECO:0000303" key="3">
    <source>
    </source>
</evidence>
<evidence type="ECO:0000305" key="4"/>
<feature type="chain" id="PRO_0000253947" description="50 kDa venom protease">
    <location>
        <begin position="1" status="less than"/>
        <end position="28" status="greater than"/>
    </location>
</feature>
<feature type="non-consecutive residues" evidence="3">
    <location>
        <begin position="11"/>
        <end position="12"/>
    </location>
</feature>
<feature type="non-consecutive residues" evidence="3">
    <location>
        <begin position="20"/>
        <end position="21"/>
    </location>
</feature>
<feature type="non-terminal residue" evidence="3">
    <location>
        <position position="1"/>
    </location>
</feature>
<feature type="non-terminal residue" evidence="3">
    <location>
        <position position="28"/>
    </location>
</feature>